<proteinExistence type="evidence at protein level"/>
<accession>P48029</accession>
<accession>B2KY47</accession>
<accession>B4DIA3</accession>
<accession>E9PFC0</accession>
<accession>Q13032</accession>
<accession>Q66I36</accession>
<organism>
    <name type="scientific">Homo sapiens</name>
    <name type="common">Human</name>
    <dbReference type="NCBI Taxonomy" id="9606"/>
    <lineage>
        <taxon>Eukaryota</taxon>
        <taxon>Metazoa</taxon>
        <taxon>Chordata</taxon>
        <taxon>Craniata</taxon>
        <taxon>Vertebrata</taxon>
        <taxon>Euteleostomi</taxon>
        <taxon>Mammalia</taxon>
        <taxon>Eutheria</taxon>
        <taxon>Euarchontoglires</taxon>
        <taxon>Primates</taxon>
        <taxon>Haplorrhini</taxon>
        <taxon>Catarrhini</taxon>
        <taxon>Hominidae</taxon>
        <taxon>Homo</taxon>
    </lineage>
</organism>
<gene>
    <name type="primary">SLC6A8</name>
</gene>
<evidence type="ECO:0000250" key="1">
    <source>
        <dbReference type="UniProtKB" id="Q8VBW1"/>
    </source>
</evidence>
<evidence type="ECO:0000255" key="2"/>
<evidence type="ECO:0000256" key="3">
    <source>
        <dbReference type="SAM" id="MobiDB-lite"/>
    </source>
</evidence>
<evidence type="ECO:0000269" key="4">
    <source>
    </source>
</evidence>
<evidence type="ECO:0000269" key="5">
    <source>
    </source>
</evidence>
<evidence type="ECO:0000269" key="6">
    <source>
    </source>
</evidence>
<evidence type="ECO:0000269" key="7">
    <source>
    </source>
</evidence>
<evidence type="ECO:0000269" key="8">
    <source>
    </source>
</evidence>
<evidence type="ECO:0000269" key="9">
    <source>
    </source>
</evidence>
<evidence type="ECO:0000269" key="10">
    <source>
    </source>
</evidence>
<evidence type="ECO:0000269" key="11">
    <source>
    </source>
</evidence>
<evidence type="ECO:0000269" key="12">
    <source>
    </source>
</evidence>
<evidence type="ECO:0000269" key="13">
    <source>
    </source>
</evidence>
<evidence type="ECO:0000269" key="14">
    <source>
    </source>
</evidence>
<evidence type="ECO:0000269" key="15">
    <source>
    </source>
</evidence>
<evidence type="ECO:0000269" key="16">
    <source>
    </source>
</evidence>
<evidence type="ECO:0000269" key="17">
    <source>
    </source>
</evidence>
<evidence type="ECO:0000269" key="18">
    <source>
    </source>
</evidence>
<evidence type="ECO:0000269" key="19">
    <source>
    </source>
</evidence>
<evidence type="ECO:0000303" key="20">
    <source>
    </source>
</evidence>
<evidence type="ECO:0000303" key="21">
    <source>
    </source>
</evidence>
<evidence type="ECO:0000303" key="22">
    <source>
    </source>
</evidence>
<evidence type="ECO:0000305" key="23"/>
<evidence type="ECO:0007744" key="24">
    <source>
    </source>
</evidence>
<evidence type="ECO:0007744" key="25">
    <source>
    </source>
</evidence>
<name>SC6A8_HUMAN</name>
<feature type="chain" id="PRO_0000214774" description="Sodium- and chloride-dependent creatine transporter 1">
    <location>
        <begin position="1"/>
        <end position="635"/>
    </location>
</feature>
<feature type="topological domain" description="Cytoplasmic" evidence="2">
    <location>
        <begin position="1"/>
        <end position="60"/>
    </location>
</feature>
<feature type="transmembrane region" description="Helical" evidence="2">
    <location>
        <begin position="61"/>
        <end position="81"/>
    </location>
</feature>
<feature type="topological domain" description="Extracellular" evidence="2">
    <location>
        <begin position="82"/>
        <end position="87"/>
    </location>
</feature>
<feature type="transmembrane region" description="Helical" evidence="2">
    <location>
        <begin position="88"/>
        <end position="108"/>
    </location>
</feature>
<feature type="topological domain" description="Cytoplasmic" evidence="2">
    <location>
        <begin position="109"/>
        <end position="138"/>
    </location>
</feature>
<feature type="transmembrane region" description="Helical" evidence="2">
    <location>
        <begin position="139"/>
        <end position="159"/>
    </location>
</feature>
<feature type="topological domain" description="Extracellular" evidence="2">
    <location>
        <begin position="160"/>
        <end position="230"/>
    </location>
</feature>
<feature type="transmembrane region" description="Helical" evidence="2">
    <location>
        <begin position="231"/>
        <end position="251"/>
    </location>
</feature>
<feature type="topological domain" description="Cytoplasmic" evidence="2">
    <location>
        <begin position="252"/>
        <end position="269"/>
    </location>
</feature>
<feature type="transmembrane region" description="Helical" evidence="2">
    <location>
        <begin position="270"/>
        <end position="290"/>
    </location>
</feature>
<feature type="topological domain" description="Extracellular" evidence="2">
    <location>
        <begin position="291"/>
        <end position="304"/>
    </location>
</feature>
<feature type="transmembrane region" description="Helical" evidence="2">
    <location>
        <begin position="305"/>
        <end position="325"/>
    </location>
</feature>
<feature type="topological domain" description="Cytoplasmic" evidence="2">
    <location>
        <begin position="326"/>
        <end position="341"/>
    </location>
</feature>
<feature type="transmembrane region" description="Helical" evidence="2">
    <location>
        <begin position="342"/>
        <end position="362"/>
    </location>
</feature>
<feature type="topological domain" description="Extracellular" evidence="2">
    <location>
        <begin position="363"/>
        <end position="394"/>
    </location>
</feature>
<feature type="transmembrane region" description="Helical" evidence="2">
    <location>
        <begin position="395"/>
        <end position="415"/>
    </location>
</feature>
<feature type="topological domain" description="Cytoplasmic" evidence="2">
    <location>
        <begin position="416"/>
        <end position="444"/>
    </location>
</feature>
<feature type="transmembrane region" description="Helical" evidence="2">
    <location>
        <begin position="445"/>
        <end position="465"/>
    </location>
</feature>
<feature type="topological domain" description="Extracellular" evidence="2">
    <location>
        <begin position="466"/>
        <end position="479"/>
    </location>
</feature>
<feature type="transmembrane region" description="Helical" evidence="2">
    <location>
        <begin position="480"/>
        <end position="500"/>
    </location>
</feature>
<feature type="topological domain" description="Cytoplasmic" evidence="2">
    <location>
        <begin position="501"/>
        <end position="520"/>
    </location>
</feature>
<feature type="transmembrane region" description="Helical" evidence="2">
    <location>
        <begin position="521"/>
        <end position="541"/>
    </location>
</feature>
<feature type="topological domain" description="Extracellular" evidence="2">
    <location>
        <begin position="542"/>
        <end position="560"/>
    </location>
</feature>
<feature type="transmembrane region" description="Helical" evidence="2">
    <location>
        <begin position="561"/>
        <end position="581"/>
    </location>
</feature>
<feature type="topological domain" description="Cytoplasmic" evidence="2">
    <location>
        <begin position="582"/>
        <end position="635"/>
    </location>
</feature>
<feature type="region of interest" description="Disordered" evidence="3">
    <location>
        <begin position="1"/>
        <end position="28"/>
    </location>
</feature>
<feature type="modified residue" description="Phosphothreonine" evidence="24 25">
    <location>
        <position position="42"/>
    </location>
</feature>
<feature type="modified residue" description="Phosphothreonine" evidence="25">
    <location>
        <position position="617"/>
    </location>
</feature>
<feature type="modified residue" description="Phosphothreonine" evidence="25">
    <location>
        <position position="620"/>
    </location>
</feature>
<feature type="modified residue" description="Phosphoserine" evidence="1">
    <location>
        <position position="623"/>
    </location>
</feature>
<feature type="glycosylation site" description="N-linked (GlcNAc...) asparagine" evidence="2">
    <location>
        <position position="192"/>
    </location>
</feature>
<feature type="glycosylation site" description="N-linked (GlcNAc...) asparagine" evidence="2">
    <location>
        <position position="197"/>
    </location>
</feature>
<feature type="glycosylation site" description="N-linked (GlcNAc...) asparagine" evidence="2">
    <location>
        <position position="548"/>
    </location>
</feature>
<feature type="splice variant" id="VSP_043916" description="In isoform 3." evidence="21">
    <location>
        <begin position="1"/>
        <end position="365"/>
    </location>
</feature>
<feature type="splice variant" id="VSP_043917" description="In isoform 2." evidence="22">
    <original>MAKKSAENGIYSVSGDEKKGPLIAPGPDGAPAKGDGPVGLGTPGGRLAVPPRETWTRQMDFIMSCVGFAVGLGNVWRFPYLCYKNGGGVFLIPYVLIALVGGIPIFFLEISLGQFMKAGSINVWNICPLFKGLGYASMVIVFYCNTYYIMVLAWGFYYLVKSFTTTLPWATCGHTWNTPDCVEIFRHEDCANASLANLTCDQLADRRSPVIEFWENKVLRLSGGLEVPGALNWEVTLCLLACWVLVYFCVWKGVKSTGK</original>
    <variation>MLPTLQIQGPAAFAPGDRGPGRHCPFPVPITPTGALLPVSDSCDSLVDLVWPSVTYLALGTQSRVWPHPLGAPGQAGESPEQRRQCLELWDMASSLGDKVPRAACGKRGQTVWQLHLACLCLAQFHSPPAQPPPLSRRGGGPDPDPISRSLPGPPTPALPTHSYSSHSPRAPRLLSPLRRAPRGSPAPHRHASLQTNEAPRELPHCTWPGLPGRSLAPSFLWREPWLGGQWGPLNIPARKGDRRRWEWGCEGGGATASAEQPGPQ</variation>
    <location>
        <begin position="1"/>
        <end position="259"/>
    </location>
</feature>
<feature type="splice variant" id="VSP_046316" description="In isoform 4." evidence="20">
    <location>
        <begin position="1"/>
        <end position="115"/>
    </location>
</feature>
<feature type="splice variant" id="VSP_043918" description="In isoform 2." evidence="22">
    <original>S</original>
    <variation>SQVCMGLWDREPGGGRREGCRQGKGWRRCGDRPELPWP</variation>
    <location>
        <position position="417"/>
    </location>
</feature>
<feature type="splice variant" id="VSP_043919" description="In isoform 2." evidence="22">
    <original>D</original>
    <variation>DVSGVGGLPVTSGGRLPSSLTGLCPQ</variation>
    <location>
        <position position="464"/>
    </location>
</feature>
<feature type="splice variant" id="VSP_043920" description="In isoform 2." evidence="22">
    <original>Y</original>
    <variation>YGRSWLRAGLGDGGGEGRSPAWPSRLTSPQ</variation>
    <location>
        <position position="498"/>
    </location>
</feature>
<feature type="sequence variant" id="VAR_075562" description="Found in a patient with intellectual disability; uncertain significance; no effect on creatine transporter activity; dbSNP:rs1190261367." evidence="8 10">
    <original>K</original>
    <variation>R</variation>
    <location>
        <position position="4"/>
    </location>
</feature>
<feature type="sequence variant" id="VAR_075563" description="Found in a patient with intellectual disability; uncertain significance; no effect on creatine transporter activity; dbSNP:rs1233444890." evidence="8 10">
    <original>G</original>
    <variation>R</variation>
    <location>
        <position position="26"/>
    </location>
</feature>
<feature type="sequence variant" id="VAR_086684" description="In CCDS1; uncertain significance; loss of creatine transporter activity; no effect on cell membrane localization." evidence="11">
    <location>
        <position position="41"/>
    </location>
</feature>
<feature type="sequence variant" id="VAR_071791" description="In CCDS1." evidence="14">
    <original>Y</original>
    <variation>H</variation>
    <location>
        <position position="80"/>
    </location>
</feature>
<feature type="sequence variant" id="VAR_020525" description="In CCDS1; uncertain significance; decreased creatine transporter activity; dbSNP:rs122453115." evidence="7 10">
    <original>G</original>
    <variation>R</variation>
    <location>
        <position position="87"/>
    </location>
</feature>
<feature type="sequence variant" id="VAR_075564" description="In CCDS1; decreased creatine transporter activity." evidence="10">
    <location>
        <position position="107"/>
    </location>
</feature>
<feature type="sequence variant" id="VAR_063707" description="In CCDS1; dbSNP:rs122453117." evidence="9">
    <original>G</original>
    <variation>V</variation>
    <location>
        <position position="132"/>
    </location>
</feature>
<feature type="sequence variant" id="VAR_034483" description="In dbSNP:rs642454.">
    <original>T</original>
    <variation>S</variation>
    <location>
        <position position="164"/>
    </location>
</feature>
<feature type="sequence variant" id="VAR_086685" description="In CCDS1; loss of creatine transporter activity; no effect on cell membrane localization." evidence="11">
    <original>C</original>
    <variation>R</variation>
    <location>
        <position position="181"/>
    </location>
</feature>
<feature type="sequence variant" id="VAR_090171" description="In CCDS1; benign; dbSNP:rs149024147." evidence="8">
    <original>V</original>
    <variation>M</variation>
    <location>
        <position position="182"/>
    </location>
</feature>
<feature type="sequence variant" id="VAR_074262" description="82.0% of wild type creatine transporter activity; dbSNP:rs372601430." evidence="16">
    <original>R</original>
    <variation>H</variation>
    <location>
        <position position="186"/>
    </location>
</feature>
<feature type="sequence variant" id="VAR_074263" description="In CCDS1; uncertain significance; no effect on creatine transporter activity; dbSNP:rs146985734." evidence="16">
    <original>V</original>
    <variation>M</variation>
    <location>
        <position position="270"/>
    </location>
</feature>
<feature type="sequence variant" id="VAR_074264" description="In CCDS1; uncertain significance; no effect on creatine transporter activity; dbSNP:rs376937460." evidence="16">
    <original>K</original>
    <variation>Q</variation>
    <location>
        <position position="294"/>
    </location>
</feature>
<feature type="sequence variant" id="VAR_074265" description="In CCDS1; uncertain significance; 65.0% of wild type creatine transporter activity; dbSNP:rs144678921." evidence="16">
    <original>F</original>
    <variation>L</variation>
    <location>
        <position position="314"/>
    </location>
</feature>
<feature type="sequence variant" id="VAR_074266" description="In CCDS1; uncertain significance; 78.0% of wild type creatine transporter activity; dbSNP:rs373953317." evidence="16">
    <original>A</original>
    <variation>T</variation>
    <location>
        <position position="318"/>
    </location>
</feature>
<feature type="sequence variant" id="VAR_070563" description="In CCDS1; decreased creatine transporter activity; no effect on cell membrane localization; dbSNP:rs782433037." evidence="8 10 11 12 15">
    <location>
        <position position="336"/>
    </location>
</feature>
<feature type="sequence variant" id="VAR_063708" description="In CCDS1; decreased creatine transporter activity; dbSNP:rs122453116." evidence="7 10">
    <original>C</original>
    <variation>W</variation>
    <location>
        <position position="337"/>
    </location>
</feature>
<feature type="sequence variant" id="VAR_075565" description="In CCDS1; decreased creatine transporter activity." evidence="8 10">
    <location>
        <position position="347"/>
    </location>
</feature>
<feature type="sequence variant" id="VAR_020526" description="In CCDS1; dbSNP:rs122453114." evidence="4">
    <original>G</original>
    <variation>R</variation>
    <location>
        <position position="381"/>
    </location>
</feature>
<feature type="sequence variant" id="VAR_071792" description="In CCDS1." evidence="14">
    <original>G</original>
    <variation>C</variation>
    <location>
        <position position="383"/>
    </location>
</feature>
<feature type="sequence variant" id="VAR_020527" description="In CCDS1; decreased creatine transporter activity; dbSNP:rs2148363661." evidence="7 10">
    <original>P</original>
    <variation>L</variation>
    <location>
        <position position="390"/>
    </location>
</feature>
<feature type="sequence variant" id="VAR_075566" description="In CCDS1; decreased creatine transporter activity; dbSNP:rs1557045267." evidence="8 10">
    <original>R</original>
    <variation>W</variation>
    <location>
        <position position="391"/>
    </location>
</feature>
<feature type="sequence variant" id="VAR_020528" description="In CCDS1; dbSNP:rs80338740." evidence="5">
    <location>
        <position position="408"/>
    </location>
</feature>
<feature type="sequence variant" id="VAR_071793" description="In CCDS1." evidence="14">
    <original>A</original>
    <variation>D</variation>
    <location>
        <position position="448"/>
    </location>
</feature>
<feature type="sequence variant" id="VAR_063709" description="In CCDS1; dbSNP:rs122453118." evidence="9">
    <original>C</original>
    <variation>W</variation>
    <location>
        <position position="491"/>
    </location>
</feature>
<feature type="sequence variant" id="VAR_086686" description="In CCDS1; uncertain significance; loss of creatine transporter activity; no effect on cell membrane localization." evidence="11">
    <location>
        <position position="499"/>
    </location>
</feature>
<feature type="sequence variant" id="VAR_071794" description="In CCDS1; dbSNP:rs782354054." evidence="14">
    <original>V</original>
    <variation>I</variation>
    <location>
        <position position="539"/>
    </location>
</feature>
<feature type="sequence variant" id="VAR_074267" description="In dbSNP:rs199635059." evidence="13 16">
    <original>T</original>
    <variation>S</variation>
    <location>
        <position position="550"/>
    </location>
</feature>
<feature type="sequence variant" id="VAR_074268" description="In CCDS1; uncertain significance; 35.0% of wild type creatine transporter activity; dbSNP:rs372567920." evidence="16">
    <original>V</original>
    <variation>L</variation>
    <location>
        <position position="552"/>
    </location>
</feature>
<feature type="sequence variant" id="VAR_020529" description="In CCDS1; decreased creatine transporter activity; dbSNP:rs397515559." evidence="7 10">
    <original>P</original>
    <variation>L</variation>
    <location>
        <position position="554"/>
    </location>
</feature>
<feature type="sequence variant" id="VAR_063710" description="No effect on creatine transporter activity; dbSNP:rs145438966." evidence="7 8 10">
    <original>M</original>
    <variation>V</variation>
    <location>
        <position position="560"/>
    </location>
</feature>
<feature type="sequence variant" id="VAR_074269" description="No effect on creatine transporter activity; dbSNP:rs201044530." evidence="16">
    <original>F</original>
    <variation>L</variation>
    <location>
        <position position="564"/>
    </location>
</feature>
<feature type="sequence variant" id="VAR_074270" description="No effect on creatine transporter activity; dbSNP:rs146949376." evidence="16">
    <original>A</original>
    <variation>T</variation>
    <location>
        <position position="611"/>
    </location>
</feature>
<feature type="sequence variant" id="VAR_074271" description="No effect on creatine transporter activity; dbSNP:rs368555229." evidence="16">
    <original>E</original>
    <variation>K</variation>
    <location>
        <position position="624"/>
    </location>
</feature>
<feature type="sequence variant" id="VAR_075567" description="No effect on creatine transporter activity; dbSNP:rs781899045." evidence="10">
    <original>V</original>
    <variation>I</variation>
    <location>
        <position position="629"/>
    </location>
</feature>
<feature type="mutagenesis site" description="No effect on creatine transporter activity." evidence="19">
    <original>A</original>
    <variation>P</variation>
    <location>
        <position position="285"/>
    </location>
</feature>
<feature type="sequence conflict" description="In Ref. 2; AAB32284." evidence="23" ref="2">
    <original>AP</original>
    <variation>VS</variation>
    <location>
        <begin position="24"/>
        <end position="25"/>
    </location>
</feature>
<feature type="sequence conflict" description="In Ref. 2; AAB32284." evidence="23" ref="2">
    <original>A</original>
    <variation>S</variation>
    <location>
        <position position="32"/>
    </location>
</feature>
<feature type="sequence conflict" description="In Ref. 2; AAB32284." evidence="23" ref="2">
    <original>V</original>
    <variation>A</variation>
    <location>
        <position position="38"/>
    </location>
</feature>
<feature type="sequence conflict" description="In Ref. 2; AAB32284." evidence="23" ref="2">
    <original>TPGG</original>
    <variation>APSS</variation>
    <location>
        <begin position="42"/>
        <end position="45"/>
    </location>
</feature>
<feature type="sequence conflict" description="In Ref. 8; BAG58415." evidence="23" ref="8">
    <original>A</original>
    <variation>G</variation>
    <location>
        <position position="136"/>
    </location>
</feature>
<feature type="sequence conflict" description="In Ref. 2; AAB32284." evidence="23" ref="2">
    <original>A</original>
    <variation>D</variation>
    <location>
        <position position="193"/>
    </location>
</feature>
<feature type="sequence conflict" description="In Ref. 2; AAB32284." evidence="23" ref="2">
    <original>G</original>
    <variation>T</variation>
    <location>
        <position position="223"/>
    </location>
</feature>
<feature type="sequence conflict" description="In Ref. 1; AAC41688." evidence="23" ref="1">
    <original>A</original>
    <variation>P</variation>
    <location>
        <position position="285"/>
    </location>
</feature>
<feature type="sequence conflict" description="In Ref. 2; AAB32284." evidence="23" ref="2">
    <original>A</original>
    <variation>T</variation>
    <location>
        <position position="368"/>
    </location>
</feature>
<feature type="sequence conflict" description="In Ref. 10; AAH81558." evidence="23" ref="10">
    <original>P</original>
    <variation>R</variation>
    <location>
        <position position="434"/>
    </location>
</feature>
<comment type="function">
    <text evidence="1 10 11 16 17 18 19">Creatine:sodium symporter which mediates the uptake of creatine (PubMed:17465020, PubMed:22644605, PubMed:25861866, PubMed:7945388, PubMed:7953292, PubMed:9882430). Plays an important role in supplying creatine to the brain via the blood-brain barrier (By similarity).</text>
</comment>
<comment type="catalytic activity">
    <reaction evidence="10 11 16 17 18 19">
        <text>creatine(out) + chloride(out) + 2 Na(+)(out) = creatine(in) + chloride(in) + 2 Na(+)(in)</text>
        <dbReference type="Rhea" id="RHEA:71831"/>
        <dbReference type="ChEBI" id="CHEBI:17996"/>
        <dbReference type="ChEBI" id="CHEBI:29101"/>
        <dbReference type="ChEBI" id="CHEBI:57947"/>
    </reaction>
</comment>
<comment type="biophysicochemical properties">
    <kinetics>
        <KM evidence="18">77 mM for creatine</KM>
        <KM evidence="17">14.9 uM for creatine</KM>
        <KM evidence="19">20 uM for creatine</KM>
        <KM evidence="19">59 mM for sodium</KM>
        <KM evidence="19">5 mM for chloride</KM>
    </kinetics>
</comment>
<comment type="subcellular location">
    <subcellularLocation>
        <location evidence="11">Cell membrane</location>
        <topology evidence="2">Multi-pass membrane protein</topology>
    </subcellularLocation>
    <subcellularLocation>
        <location evidence="6">Apical cell membrane</location>
        <topology evidence="2">Multi-pass membrane protein</topology>
    </subcellularLocation>
</comment>
<comment type="alternative products">
    <event type="alternative splicing"/>
    <isoform>
        <id>P48029-1</id>
        <name>1</name>
        <name>CRT1</name>
        <sequence type="displayed"/>
    </isoform>
    <isoform>
        <id>P48029-2</id>
        <name>2</name>
        <name>CRT2</name>
        <name>SLC6A8B</name>
        <sequence type="described" ref="VSP_043917 VSP_043918 VSP_043919 VSP_043920"/>
    </isoform>
    <isoform>
        <id>P48029-3</id>
        <name>3</name>
        <name>SLC6A8C</name>
        <sequence type="described" ref="VSP_043916"/>
    </isoform>
    <isoform>
        <id>P48029-4</id>
        <name>4</name>
        <sequence type="described" ref="VSP_046316"/>
    </isoform>
</comment>
<comment type="tissue specificity">
    <text evidence="17 18">Predominantly expressed in skeletal muscle and kidney. Also found in brain, heart, colon, testis and prostate.</text>
</comment>
<comment type="PTM">
    <text evidence="1">Glycosylated.</text>
</comment>
<comment type="disease" evidence="4 5 7 8 9 10 11 12 14 15 16">
    <disease id="DI-02440">
        <name>Cerebral creatine deficiency syndrome 1</name>
        <acronym>CCDS1</acronym>
        <description>An X-linked disorder of creatine transport characterized by intellectual disability, severe speech delay, behavioral abnormalities, and seizures. Carrier females may show mild neuropsychologic impairment.</description>
        <dbReference type="MIM" id="300352"/>
    </disease>
    <text>The disease is caused by variants affecting the gene represented in this entry.</text>
</comment>
<comment type="similarity">
    <text evidence="23">Belongs to the sodium:neurotransmitter symporter (SNF) (TC 2.A.22) family. SLC6A8 subfamily.</text>
</comment>
<reference key="1">
    <citation type="journal article" date="1994" name="Recept. Channels">
        <title>Cloning, pharmacological characterization, and genomic localization of the human creatine transporter.</title>
        <authorList>
            <person name="Nash S.R."/>
            <person name="Giros B."/>
            <person name="Kingsmore S.F."/>
            <person name="Rochelle J.M."/>
            <person name="Suter S.T."/>
            <person name="Gregor P."/>
            <person name="Seldin M.F."/>
            <person name="Caron M.G."/>
        </authorList>
    </citation>
    <scope>NUCLEOTIDE SEQUENCE [MRNA] (ISOFORM 1)</scope>
    <scope>TISSUE SPECIFICITY</scope>
    <scope>FUNCTION</scope>
    <scope>TRANSPORTER ACTIVITY</scope>
    <scope>BIOPHYSICOCHEMICAL PROPERTIES</scope>
    <source>
        <tissue>Kidney</tissue>
    </source>
</reference>
<reference key="2">
    <citation type="journal article" date="1994" name="Biochem. Biophys. Res. Commun.">
        <title>The cloning and expression of a human creatine transporter.</title>
        <authorList>
            <person name="Sora I."/>
            <person name="Richman J."/>
            <person name="Santoro G."/>
            <person name="Wei H."/>
            <person name="Wang Y."/>
            <person name="Vanderah T."/>
            <person name="Horvath R."/>
            <person name="Nguyen M."/>
            <person name="Waite S."/>
            <person name="Roeske W.R."/>
        </authorList>
    </citation>
    <scope>NUCLEOTIDE SEQUENCE [MRNA] (ISOFORM 1)</scope>
    <scope>TISSUE SPECIFICITY</scope>
    <scope>FUNCTION</scope>
    <scope>TRANSPORTER ACTIVITY</scope>
    <scope>BIOPHYSICOCHEMICAL PROPERTIES</scope>
    <source>
        <tissue>Brain</tissue>
    </source>
</reference>
<reference key="3">
    <citation type="journal article" date="1996" name="Genomics">
        <title>The genomic organization of a human creatine transporter (CRTR) gene located in Xq28.</title>
        <authorList>
            <person name="Sandoval N."/>
            <person name="Bauer D."/>
            <person name="Brenner V."/>
            <person name="Coy J.F."/>
            <person name="Drescher B."/>
            <person name="Kioschis P."/>
            <person name="Korn B."/>
            <person name="Nyakatura G."/>
            <person name="Poustka A."/>
            <person name="Reichwald K."/>
            <person name="Rosenthal A."/>
            <person name="Platzer M."/>
        </authorList>
    </citation>
    <scope>NUCLEOTIDE SEQUENCE [GENOMIC DNA]</scope>
</reference>
<reference key="4">
    <citation type="journal article" date="1995" name="Gene">
        <title>Cloning and sequencing of a cDNA encoding a novel member of the human brain GABA/noradrenaline neurotransmitter transporter family.</title>
        <authorList>
            <person name="Barnwell L.F."/>
            <person name="Chaudhuri G."/>
            <person name="Townsel J.G."/>
        </authorList>
    </citation>
    <scope>NUCLEOTIDE SEQUENCE [MRNA] (ISOFORM 2)</scope>
    <source>
        <tissue>Hippocampus</tissue>
    </source>
</reference>
<reference key="5">
    <citation type="journal article" date="1999" name="Arch. Biochem. Biophys.">
        <title>Molecular characterization of the human CRT-1 creatine transporter expressed in Xenopus oocytes.</title>
        <authorList>
            <person name="Dai W."/>
            <person name="Vinnakota S."/>
            <person name="Qian X."/>
            <person name="Kunze D.L."/>
            <person name="Sarkar H.K."/>
        </authorList>
    </citation>
    <scope>NUCLEOTIDE SEQUENCE [MRNA] (ISOFORM 1)</scope>
    <scope>FUNCTION</scope>
    <scope>TRANSPORTER ACTIVITY</scope>
    <scope>BIOPHYSICOCHEMICAL PROPERTIES</scope>
    <scope>MUTAGENESIS OF ALA-285</scope>
    <source>
        <tissue>Heart</tissue>
    </source>
</reference>
<reference key="6">
    <citation type="journal article" date="2008" name="Gene">
        <title>Identification, characterization and cloning of SLC6A8C, a novel splice variant of the creatine transporter gene.</title>
        <authorList>
            <person name="Martinez-Munoz C."/>
            <person name="Rosenberg E.H."/>
            <person name="Jakobs C."/>
            <person name="Salomons G.S."/>
        </authorList>
    </citation>
    <scope>NUCLEOTIDE SEQUENCE [MRNA] (ISOFORM 3)</scope>
</reference>
<reference key="7">
    <citation type="submission" date="1995-09" db="EMBL/GenBank/DDBJ databases">
        <title>Genomic organization of the human creatine transporter and CDM genes.</title>
        <authorList>
            <person name="Eichler E.E."/>
            <person name="Lu F."/>
            <person name="Shen Y."/>
            <person name="Muzny D.M."/>
            <person name="Gibbs R.A."/>
            <person name="Nelson D.L."/>
        </authorList>
    </citation>
    <scope>NUCLEOTIDE SEQUENCE [GENOMIC DNA]</scope>
</reference>
<reference key="8">
    <citation type="journal article" date="2004" name="Nat. Genet.">
        <title>Complete sequencing and characterization of 21,243 full-length human cDNAs.</title>
        <authorList>
            <person name="Ota T."/>
            <person name="Suzuki Y."/>
            <person name="Nishikawa T."/>
            <person name="Otsuki T."/>
            <person name="Sugiyama T."/>
            <person name="Irie R."/>
            <person name="Wakamatsu A."/>
            <person name="Hayashi K."/>
            <person name="Sato H."/>
            <person name="Nagai K."/>
            <person name="Kimura K."/>
            <person name="Makita H."/>
            <person name="Sekine M."/>
            <person name="Obayashi M."/>
            <person name="Nishi T."/>
            <person name="Shibahara T."/>
            <person name="Tanaka T."/>
            <person name="Ishii S."/>
            <person name="Yamamoto J."/>
            <person name="Saito K."/>
            <person name="Kawai Y."/>
            <person name="Isono Y."/>
            <person name="Nakamura Y."/>
            <person name="Nagahari K."/>
            <person name="Murakami K."/>
            <person name="Yasuda T."/>
            <person name="Iwayanagi T."/>
            <person name="Wagatsuma M."/>
            <person name="Shiratori A."/>
            <person name="Sudo H."/>
            <person name="Hosoiri T."/>
            <person name="Kaku Y."/>
            <person name="Kodaira H."/>
            <person name="Kondo H."/>
            <person name="Sugawara M."/>
            <person name="Takahashi M."/>
            <person name="Kanda K."/>
            <person name="Yokoi T."/>
            <person name="Furuya T."/>
            <person name="Kikkawa E."/>
            <person name="Omura Y."/>
            <person name="Abe K."/>
            <person name="Kamihara K."/>
            <person name="Katsuta N."/>
            <person name="Sato K."/>
            <person name="Tanikawa M."/>
            <person name="Yamazaki M."/>
            <person name="Ninomiya K."/>
            <person name="Ishibashi T."/>
            <person name="Yamashita H."/>
            <person name="Murakawa K."/>
            <person name="Fujimori K."/>
            <person name="Tanai H."/>
            <person name="Kimata M."/>
            <person name="Watanabe M."/>
            <person name="Hiraoka S."/>
            <person name="Chiba Y."/>
            <person name="Ishida S."/>
            <person name="Ono Y."/>
            <person name="Takiguchi S."/>
            <person name="Watanabe S."/>
            <person name="Yosida M."/>
            <person name="Hotuta T."/>
            <person name="Kusano J."/>
            <person name="Kanehori K."/>
            <person name="Takahashi-Fujii A."/>
            <person name="Hara H."/>
            <person name="Tanase T.-O."/>
            <person name="Nomura Y."/>
            <person name="Togiya S."/>
            <person name="Komai F."/>
            <person name="Hara R."/>
            <person name="Takeuchi K."/>
            <person name="Arita M."/>
            <person name="Imose N."/>
            <person name="Musashino K."/>
            <person name="Yuuki H."/>
            <person name="Oshima A."/>
            <person name="Sasaki N."/>
            <person name="Aotsuka S."/>
            <person name="Yoshikawa Y."/>
            <person name="Matsunawa H."/>
            <person name="Ichihara T."/>
            <person name="Shiohata N."/>
            <person name="Sano S."/>
            <person name="Moriya S."/>
            <person name="Momiyama H."/>
            <person name="Satoh N."/>
            <person name="Takami S."/>
            <person name="Terashima Y."/>
            <person name="Suzuki O."/>
            <person name="Nakagawa S."/>
            <person name="Senoh A."/>
            <person name="Mizoguchi H."/>
            <person name="Goto Y."/>
            <person name="Shimizu F."/>
            <person name="Wakebe H."/>
            <person name="Hishigaki H."/>
            <person name="Watanabe T."/>
            <person name="Sugiyama A."/>
            <person name="Takemoto M."/>
            <person name="Kawakami B."/>
            <person name="Yamazaki M."/>
            <person name="Watanabe K."/>
            <person name="Kumagai A."/>
            <person name="Itakura S."/>
            <person name="Fukuzumi Y."/>
            <person name="Fujimori Y."/>
            <person name="Komiyama M."/>
            <person name="Tashiro H."/>
            <person name="Tanigami A."/>
            <person name="Fujiwara T."/>
            <person name="Ono T."/>
            <person name="Yamada K."/>
            <person name="Fujii Y."/>
            <person name="Ozaki K."/>
            <person name="Hirao M."/>
            <person name="Ohmori Y."/>
            <person name="Kawabata A."/>
            <person name="Hikiji T."/>
            <person name="Kobatake N."/>
            <person name="Inagaki H."/>
            <person name="Ikema Y."/>
            <person name="Okamoto S."/>
            <person name="Okitani R."/>
            <person name="Kawakami T."/>
            <person name="Noguchi S."/>
            <person name="Itoh T."/>
            <person name="Shigeta K."/>
            <person name="Senba T."/>
            <person name="Matsumura K."/>
            <person name="Nakajima Y."/>
            <person name="Mizuno T."/>
            <person name="Morinaga M."/>
            <person name="Sasaki M."/>
            <person name="Togashi T."/>
            <person name="Oyama M."/>
            <person name="Hata H."/>
            <person name="Watanabe M."/>
            <person name="Komatsu T."/>
            <person name="Mizushima-Sugano J."/>
            <person name="Satoh T."/>
            <person name="Shirai Y."/>
            <person name="Takahashi Y."/>
            <person name="Nakagawa K."/>
            <person name="Okumura K."/>
            <person name="Nagase T."/>
            <person name="Nomura N."/>
            <person name="Kikuchi H."/>
            <person name="Masuho Y."/>
            <person name="Yamashita R."/>
            <person name="Nakai K."/>
            <person name="Yada T."/>
            <person name="Nakamura Y."/>
            <person name="Ohara O."/>
            <person name="Isogai T."/>
            <person name="Sugano S."/>
        </authorList>
    </citation>
    <scope>NUCLEOTIDE SEQUENCE [LARGE SCALE MRNA] (ISOFORM 4)</scope>
    <source>
        <tissue>Hippocampus</tissue>
    </source>
</reference>
<reference key="9">
    <citation type="journal article" date="2005" name="Nature">
        <title>The DNA sequence of the human X chromosome.</title>
        <authorList>
            <person name="Ross M.T."/>
            <person name="Grafham D.V."/>
            <person name="Coffey A.J."/>
            <person name="Scherer S."/>
            <person name="McLay K."/>
            <person name="Muzny D."/>
            <person name="Platzer M."/>
            <person name="Howell G.R."/>
            <person name="Burrows C."/>
            <person name="Bird C.P."/>
            <person name="Frankish A."/>
            <person name="Lovell F.L."/>
            <person name="Howe K.L."/>
            <person name="Ashurst J.L."/>
            <person name="Fulton R.S."/>
            <person name="Sudbrak R."/>
            <person name="Wen G."/>
            <person name="Jones M.C."/>
            <person name="Hurles M.E."/>
            <person name="Andrews T.D."/>
            <person name="Scott C.E."/>
            <person name="Searle S."/>
            <person name="Ramser J."/>
            <person name="Whittaker A."/>
            <person name="Deadman R."/>
            <person name="Carter N.P."/>
            <person name="Hunt S.E."/>
            <person name="Chen R."/>
            <person name="Cree A."/>
            <person name="Gunaratne P."/>
            <person name="Havlak P."/>
            <person name="Hodgson A."/>
            <person name="Metzker M.L."/>
            <person name="Richards S."/>
            <person name="Scott G."/>
            <person name="Steffen D."/>
            <person name="Sodergren E."/>
            <person name="Wheeler D.A."/>
            <person name="Worley K.C."/>
            <person name="Ainscough R."/>
            <person name="Ambrose K.D."/>
            <person name="Ansari-Lari M.A."/>
            <person name="Aradhya S."/>
            <person name="Ashwell R.I."/>
            <person name="Babbage A.K."/>
            <person name="Bagguley C.L."/>
            <person name="Ballabio A."/>
            <person name="Banerjee R."/>
            <person name="Barker G.E."/>
            <person name="Barlow K.F."/>
            <person name="Barrett I.P."/>
            <person name="Bates K.N."/>
            <person name="Beare D.M."/>
            <person name="Beasley H."/>
            <person name="Beasley O."/>
            <person name="Beck A."/>
            <person name="Bethel G."/>
            <person name="Blechschmidt K."/>
            <person name="Brady N."/>
            <person name="Bray-Allen S."/>
            <person name="Bridgeman A.M."/>
            <person name="Brown A.J."/>
            <person name="Brown M.J."/>
            <person name="Bonnin D."/>
            <person name="Bruford E.A."/>
            <person name="Buhay C."/>
            <person name="Burch P."/>
            <person name="Burford D."/>
            <person name="Burgess J."/>
            <person name="Burrill W."/>
            <person name="Burton J."/>
            <person name="Bye J.M."/>
            <person name="Carder C."/>
            <person name="Carrel L."/>
            <person name="Chako J."/>
            <person name="Chapman J.C."/>
            <person name="Chavez D."/>
            <person name="Chen E."/>
            <person name="Chen G."/>
            <person name="Chen Y."/>
            <person name="Chen Z."/>
            <person name="Chinault C."/>
            <person name="Ciccodicola A."/>
            <person name="Clark S.Y."/>
            <person name="Clarke G."/>
            <person name="Clee C.M."/>
            <person name="Clegg S."/>
            <person name="Clerc-Blankenburg K."/>
            <person name="Clifford K."/>
            <person name="Cobley V."/>
            <person name="Cole C.G."/>
            <person name="Conquer J.S."/>
            <person name="Corby N."/>
            <person name="Connor R.E."/>
            <person name="David R."/>
            <person name="Davies J."/>
            <person name="Davis C."/>
            <person name="Davis J."/>
            <person name="Delgado O."/>
            <person name="Deshazo D."/>
            <person name="Dhami P."/>
            <person name="Ding Y."/>
            <person name="Dinh H."/>
            <person name="Dodsworth S."/>
            <person name="Draper H."/>
            <person name="Dugan-Rocha S."/>
            <person name="Dunham A."/>
            <person name="Dunn M."/>
            <person name="Durbin K.J."/>
            <person name="Dutta I."/>
            <person name="Eades T."/>
            <person name="Ellwood M."/>
            <person name="Emery-Cohen A."/>
            <person name="Errington H."/>
            <person name="Evans K.L."/>
            <person name="Faulkner L."/>
            <person name="Francis F."/>
            <person name="Frankland J."/>
            <person name="Fraser A.E."/>
            <person name="Galgoczy P."/>
            <person name="Gilbert J."/>
            <person name="Gill R."/>
            <person name="Gloeckner G."/>
            <person name="Gregory S.G."/>
            <person name="Gribble S."/>
            <person name="Griffiths C."/>
            <person name="Grocock R."/>
            <person name="Gu Y."/>
            <person name="Gwilliam R."/>
            <person name="Hamilton C."/>
            <person name="Hart E.A."/>
            <person name="Hawes A."/>
            <person name="Heath P.D."/>
            <person name="Heitmann K."/>
            <person name="Hennig S."/>
            <person name="Hernandez J."/>
            <person name="Hinzmann B."/>
            <person name="Ho S."/>
            <person name="Hoffs M."/>
            <person name="Howden P.J."/>
            <person name="Huckle E.J."/>
            <person name="Hume J."/>
            <person name="Hunt P.J."/>
            <person name="Hunt A.R."/>
            <person name="Isherwood J."/>
            <person name="Jacob L."/>
            <person name="Johnson D."/>
            <person name="Jones S."/>
            <person name="de Jong P.J."/>
            <person name="Joseph S.S."/>
            <person name="Keenan S."/>
            <person name="Kelly S."/>
            <person name="Kershaw J.K."/>
            <person name="Khan Z."/>
            <person name="Kioschis P."/>
            <person name="Klages S."/>
            <person name="Knights A.J."/>
            <person name="Kosiura A."/>
            <person name="Kovar-Smith C."/>
            <person name="Laird G.K."/>
            <person name="Langford C."/>
            <person name="Lawlor S."/>
            <person name="Leversha M."/>
            <person name="Lewis L."/>
            <person name="Liu W."/>
            <person name="Lloyd C."/>
            <person name="Lloyd D.M."/>
            <person name="Loulseged H."/>
            <person name="Loveland J.E."/>
            <person name="Lovell J.D."/>
            <person name="Lozado R."/>
            <person name="Lu J."/>
            <person name="Lyne R."/>
            <person name="Ma J."/>
            <person name="Maheshwari M."/>
            <person name="Matthews L.H."/>
            <person name="McDowall J."/>
            <person name="McLaren S."/>
            <person name="McMurray A."/>
            <person name="Meidl P."/>
            <person name="Meitinger T."/>
            <person name="Milne S."/>
            <person name="Miner G."/>
            <person name="Mistry S.L."/>
            <person name="Morgan M."/>
            <person name="Morris S."/>
            <person name="Mueller I."/>
            <person name="Mullikin J.C."/>
            <person name="Nguyen N."/>
            <person name="Nordsiek G."/>
            <person name="Nyakatura G."/>
            <person name="O'dell C.N."/>
            <person name="Okwuonu G."/>
            <person name="Palmer S."/>
            <person name="Pandian R."/>
            <person name="Parker D."/>
            <person name="Parrish J."/>
            <person name="Pasternak S."/>
            <person name="Patel D."/>
            <person name="Pearce A.V."/>
            <person name="Pearson D.M."/>
            <person name="Pelan S.E."/>
            <person name="Perez L."/>
            <person name="Porter K.M."/>
            <person name="Ramsey Y."/>
            <person name="Reichwald K."/>
            <person name="Rhodes S."/>
            <person name="Ridler K.A."/>
            <person name="Schlessinger D."/>
            <person name="Schueler M.G."/>
            <person name="Sehra H.K."/>
            <person name="Shaw-Smith C."/>
            <person name="Shen H."/>
            <person name="Sheridan E.M."/>
            <person name="Shownkeen R."/>
            <person name="Skuce C.D."/>
            <person name="Smith M.L."/>
            <person name="Sotheran E.C."/>
            <person name="Steingruber H.E."/>
            <person name="Steward C.A."/>
            <person name="Storey R."/>
            <person name="Swann R.M."/>
            <person name="Swarbreck D."/>
            <person name="Tabor P.E."/>
            <person name="Taudien S."/>
            <person name="Taylor T."/>
            <person name="Teague B."/>
            <person name="Thomas K."/>
            <person name="Thorpe A."/>
            <person name="Timms K."/>
            <person name="Tracey A."/>
            <person name="Trevanion S."/>
            <person name="Tromans A.C."/>
            <person name="d'Urso M."/>
            <person name="Verduzco D."/>
            <person name="Villasana D."/>
            <person name="Waldron L."/>
            <person name="Wall M."/>
            <person name="Wang Q."/>
            <person name="Warren J."/>
            <person name="Warry G.L."/>
            <person name="Wei X."/>
            <person name="West A."/>
            <person name="Whitehead S.L."/>
            <person name="Whiteley M.N."/>
            <person name="Wilkinson J.E."/>
            <person name="Willey D.L."/>
            <person name="Williams G."/>
            <person name="Williams L."/>
            <person name="Williamson A."/>
            <person name="Williamson H."/>
            <person name="Wilming L."/>
            <person name="Woodmansey R.L."/>
            <person name="Wray P.W."/>
            <person name="Yen J."/>
            <person name="Zhang J."/>
            <person name="Zhou J."/>
            <person name="Zoghbi H."/>
            <person name="Zorilla S."/>
            <person name="Buck D."/>
            <person name="Reinhardt R."/>
            <person name="Poustka A."/>
            <person name="Rosenthal A."/>
            <person name="Lehrach H."/>
            <person name="Meindl A."/>
            <person name="Minx P.J."/>
            <person name="Hillier L.W."/>
            <person name="Willard H.F."/>
            <person name="Wilson R.K."/>
            <person name="Waterston R.H."/>
            <person name="Rice C.M."/>
            <person name="Vaudin M."/>
            <person name="Coulson A."/>
            <person name="Nelson D.L."/>
            <person name="Weinstock G."/>
            <person name="Sulston J.E."/>
            <person name="Durbin R.M."/>
            <person name="Hubbard T."/>
            <person name="Gibbs R.A."/>
            <person name="Beck S."/>
            <person name="Rogers J."/>
            <person name="Bentley D.R."/>
        </authorList>
    </citation>
    <scope>NUCLEOTIDE SEQUENCE [LARGE SCALE GENOMIC DNA]</scope>
</reference>
<reference key="10">
    <citation type="journal article" date="2004" name="Genome Res.">
        <title>The status, quality, and expansion of the NIH full-length cDNA project: the Mammalian Gene Collection (MGC).</title>
        <authorList>
            <consortium name="The MGC Project Team"/>
        </authorList>
    </citation>
    <scope>NUCLEOTIDE SEQUENCE [LARGE SCALE MRNA] (ISOFORM 1)</scope>
    <source>
        <tissue>Eye</tissue>
        <tissue>Testis</tissue>
    </source>
</reference>
<reference key="11">
    <citation type="journal article" date="2002" name="J. Physiol. (Lond.)">
        <title>Human, rat and chicken small intestinal Na+ - Cl- -creatine transporter: functional, molecular characterization and localization.</title>
        <authorList>
            <person name="Peral M.J."/>
            <person name="Garcia-Delgado M."/>
            <person name="Calonge M.L."/>
            <person name="Duran J.M."/>
            <person name="De La Horra M.C."/>
            <person name="Wallimann T."/>
            <person name="Speer O."/>
            <person name="Ilundain A."/>
        </authorList>
    </citation>
    <scope>SUBCELLULAR LOCATION</scope>
    <scope>TISSUE SPECIFICITY</scope>
</reference>
<reference key="12">
    <citation type="journal article" date="2008" name="Mol. Cell">
        <title>Kinase-selective enrichment enables quantitative phosphoproteomics of the kinome across the cell cycle.</title>
        <authorList>
            <person name="Daub H."/>
            <person name="Olsen J.V."/>
            <person name="Bairlein M."/>
            <person name="Gnad F."/>
            <person name="Oppermann F.S."/>
            <person name="Korner R."/>
            <person name="Greff Z."/>
            <person name="Keri G."/>
            <person name="Stemmann O."/>
            <person name="Mann M."/>
        </authorList>
    </citation>
    <scope>IDENTIFICATION BY MASS SPECTROMETRY [LARGE SCALE ANALYSIS]</scope>
    <source>
        <tissue>Cervix carcinoma</tissue>
    </source>
</reference>
<reference key="13">
    <citation type="journal article" date="2010" name="Sci. Signal.">
        <title>Quantitative phosphoproteomics reveals widespread full phosphorylation site occupancy during mitosis.</title>
        <authorList>
            <person name="Olsen J.V."/>
            <person name="Vermeulen M."/>
            <person name="Santamaria A."/>
            <person name="Kumar C."/>
            <person name="Miller M.L."/>
            <person name="Jensen L.J."/>
            <person name="Gnad F."/>
            <person name="Cox J."/>
            <person name="Jensen T.S."/>
            <person name="Nigg E.A."/>
            <person name="Brunak S."/>
            <person name="Mann M."/>
        </authorList>
    </citation>
    <scope>PHOSPHORYLATION [LARGE SCALE ANALYSIS] AT THR-42</scope>
    <scope>IDENTIFICATION BY MASS SPECTROMETRY [LARGE SCALE ANALYSIS]</scope>
    <source>
        <tissue>Cervix carcinoma</tissue>
    </source>
</reference>
<reference key="14">
    <citation type="journal article" date="2013" name="J. Proteome Res.">
        <title>Toward a comprehensive characterization of a human cancer cell phosphoproteome.</title>
        <authorList>
            <person name="Zhou H."/>
            <person name="Di Palma S."/>
            <person name="Preisinger C."/>
            <person name="Peng M."/>
            <person name="Polat A.N."/>
            <person name="Heck A.J."/>
            <person name="Mohammed S."/>
        </authorList>
    </citation>
    <scope>PHOSPHORYLATION [LARGE SCALE ANALYSIS] AT THR-42; THR-617 AND THR-620</scope>
    <scope>IDENTIFICATION BY MASS SPECTROMETRY [LARGE SCALE ANALYSIS]</scope>
    <source>
        <tissue>Cervix carcinoma</tissue>
        <tissue>Erythroleukemia</tissue>
    </source>
</reference>
<reference key="15">
    <citation type="journal article" date="2002" name="Am. J. Hum. Genet.">
        <title>X-linked mental retardation with seizures and carrier manifestations is caused by a mutation in the creatine-transporter gene (SLC6A8) located in Xq28.</title>
        <authorList>
            <person name="Hahn K.A."/>
            <person name="Salomons G.S."/>
            <person name="Tackels-Horne D."/>
            <person name="Wood T.C."/>
            <person name="Taylor H.A."/>
            <person name="Schroer R.J."/>
            <person name="Lubs H.A."/>
            <person name="Jakobs C."/>
            <person name="Olson R.L."/>
            <person name="Holden K.R."/>
            <person name="Stevenson R.E."/>
            <person name="Schwartz C.E."/>
        </authorList>
    </citation>
    <scope>VARIANT CCDS1 ARG-381</scope>
</reference>
<reference key="16">
    <citation type="journal article" date="2002" name="Ann. Neurol.">
        <title>X-linked creatine deficiency syndrome: a novel mutation in creatine transporter gene SLC6A8.</title>
        <authorList>
            <person name="Bizzi A."/>
            <person name="Bugiani M."/>
            <person name="Salomons G.S."/>
            <person name="Hunneman D.H."/>
            <person name="Moroni I."/>
            <person name="Estienne M."/>
            <person name="Danesi U."/>
            <person name="Jakobs C."/>
            <person name="Uziel G."/>
        </authorList>
    </citation>
    <scope>VARIANT CCDS1 PHE-408 DEL</scope>
</reference>
<reference key="17">
    <citation type="journal article" date="2004" name="Am. J. Hum. Genet.">
        <title>High prevalence of SLC6A8 deficiency in X-linked mental retardation.</title>
        <authorList>
            <person name="Rosenberg E.H."/>
            <person name="Almeida L.S."/>
            <person name="Kleefstra T."/>
            <person name="deGrauw R.S."/>
            <person name="Yntema H.G."/>
            <person name="Bahi N."/>
            <person name="Moraine C."/>
            <person name="Ropers H.-H."/>
            <person name="Fryns J.-P."/>
            <person name="deGrauw T.J."/>
            <person name="Jakobs C."/>
            <person name="Salomons G.S."/>
        </authorList>
    </citation>
    <scope>VARIANTS CCDS1 ARG-87; TRP-337; LEU-390 AND LEU-554</scope>
    <scope>VARIANT VAL-560</scope>
</reference>
<reference key="18">
    <citation type="journal article" date="2006" name="Hum. Genet.">
        <title>X-linked creatine transporter (SLC6A8) mutations in about 1% of males with mental retardation of unknown etiology.</title>
        <authorList>
            <person name="Clark A.J."/>
            <person name="Rosenberg E.H."/>
            <person name="Almeida L.S."/>
            <person name="Wood T.C."/>
            <person name="Jakobs C."/>
            <person name="Stevenson R.E."/>
            <person name="Schwartz C.E."/>
            <person name="Salomons G.S."/>
        </authorList>
    </citation>
    <scope>VARIANTS CCDS1 MET-182; ASN-336 DEL; ILE-347 DEL AND TRP-391</scope>
    <scope>VARIANTS ARG-4; ARG-26 AND VAL-560</scope>
</reference>
<reference key="19">
    <citation type="journal article" date="2006" name="Neurology">
        <title>High frequency of creatine deficiency syndromes in patients with unexplained mental retardation.</title>
        <authorList>
            <person name="Lion-Francois L."/>
            <person name="Cheillan D."/>
            <person name="Pitelet G."/>
            <person name="Acquaviva-Bourdain C."/>
            <person name="Bussy G."/>
            <person name="Cotton F."/>
            <person name="Guibaud L."/>
            <person name="Gerard D."/>
            <person name="Rivier C."/>
            <person name="Vianey-Saban C."/>
            <person name="Jakobs C."/>
            <person name="Salomons G.S."/>
            <person name="des Portes V."/>
        </authorList>
    </citation>
    <scope>VARIANTS CCDS1 VAL-132 AND TRP-491</scope>
</reference>
<reference key="20">
    <citation type="journal article" date="2007" name="Hum. Mutat.">
        <title>Functional characterization of missense variants in the creatine transporter gene (SLC6A8): improved diagnostic application.</title>
        <authorList>
            <person name="Rosenberg E.H."/>
            <person name="Martinez Munoz C."/>
            <person name="Betsalel O.T."/>
            <person name="van Dooren S.J."/>
            <person name="Fernandez M."/>
            <person name="Jakobs C."/>
            <person name="deGrauw T.J."/>
            <person name="Kleefstra T."/>
            <person name="Schwartz C.E."/>
            <person name="Salomons G.S."/>
        </authorList>
    </citation>
    <scope>VARIANTS CCDS1 ARG-87; PHE-107 DEL; ASN-336 DEL; TRP-337; ILE-347 DEL; LEU-390; TRP-391 AND LEU-554</scope>
    <scope>VARIANTS ARG-4; ARG-26; VAL-560 AND ILE-629</scope>
    <scope>CHARACTERIZATION OF VARIANTS CCDS1 ARG-87; PHE-107 DEL; ASN-336 DEL; TRP-337; ILE-347 DEL; LEU-390 AND TRP-391</scope>
    <scope>CHARACTERIZATION OF VARIANTS ARG-4; ARG-26; VAL-560 AND ILE-629</scope>
    <scope>FUNCTION</scope>
    <scope>TRANSPORTER ACTIVITY</scope>
</reference>
<reference key="21">
    <citation type="journal article" date="2012" name="N. Engl. J. Med.">
        <title>Diagnostic exome sequencing in persons with severe intellectual disability.</title>
        <authorList>
            <person name="de Ligt J."/>
            <person name="Willemsen M.H."/>
            <person name="van Bon B.W."/>
            <person name="Kleefstra T."/>
            <person name="Yntema H.G."/>
            <person name="Kroes T."/>
            <person name="Vulto-van Silfhout A.T."/>
            <person name="Koolen D.A."/>
            <person name="de Vries P."/>
            <person name="Gilissen C."/>
            <person name="del Rosario M."/>
            <person name="Hoischen A."/>
            <person name="Scheffer H."/>
            <person name="de Vries B.B."/>
            <person name="Brunner H.G."/>
            <person name="Veltman J.A."/>
            <person name="Vissers L.E."/>
        </authorList>
    </citation>
    <scope>VARIANT CCDS1 ASN-336 DEL</scope>
</reference>
<reference key="22">
    <citation type="journal article" date="2012" name="Transl. Psychiatry">
        <title>Analysis of the chromosome X exome in patients with autism spectrum disorders identified novel candidate genes, including TMLHE.</title>
        <authorList>
            <person name="Nava C."/>
            <person name="Lamari F."/>
            <person name="Heron D."/>
            <person name="Mignot C."/>
            <person name="Rastetter A."/>
            <person name="Keren B."/>
            <person name="Cohen D."/>
            <person name="Faudet A."/>
            <person name="Bouteiller D."/>
            <person name="Gilleron M."/>
            <person name="Jacquette A."/>
            <person name="Whalen S."/>
            <person name="Afenjar A."/>
            <person name="Perisse D."/>
            <person name="Laurent C."/>
            <person name="Dupuits C."/>
            <person name="Gautier C."/>
            <person name="Gerard M."/>
            <person name="Huguet G."/>
            <person name="Caillet S."/>
            <person name="Leheup B."/>
            <person name="Leboyer M."/>
            <person name="Gillberg C."/>
            <person name="Delorme R."/>
            <person name="Bourgeron T."/>
            <person name="Brice A."/>
            <person name="Depienne C."/>
        </authorList>
    </citation>
    <scope>VARIANT SER-550</scope>
</reference>
<reference key="23">
    <citation type="journal article" date="2013" name="J. Inherit. Metab. Dis.">
        <title>Functional and electrophysiological characterization of four non-truncating mutations responsible for creatine transporter (SLC6A8) deficiency syndrome.</title>
        <authorList>
            <person name="Valayannopoulos V."/>
            <person name="Bakouh N."/>
            <person name="Mazzuca M."/>
            <person name="Nonnenmacher L."/>
            <person name="Hubert L."/>
            <person name="Makaci F.L."/>
            <person name="Chabli A."/>
            <person name="Salomons G.S."/>
            <person name="Mellot-Draznieks C."/>
            <person name="Brule E."/>
            <person name="de Lonlay P."/>
            <person name="Toulhoat H."/>
            <person name="Munnich A."/>
            <person name="Planelles G."/>
            <person name="de Keyzer Y."/>
        </authorList>
    </citation>
    <scope>VARIANTS CCDS1 GLY-41 DEL; ARG-181; ASN-336 DEL AND GLY-499 DEL</scope>
    <scope>CHARACTERIZATION OF VARIANTS CCDS1 GLY-41 DEL; ARG-181; ASN-336 DEL AND GLY-499 DEL</scope>
    <scope>FUNCTION</scope>
    <scope>TRANSPORTER ACTIVITY</scope>
    <scope>SUBCELLULAR LOCATION</scope>
</reference>
<reference key="24">
    <citation type="journal article" date="2013" name="J. Med. Genet.">
        <title>Identification of pathogenic gene variants in small families with intellectually disabled siblings by exome sequencing.</title>
        <authorList>
            <person name="Schuurs-Hoeijmakers J.H."/>
            <person name="Vulto-van Silfhout A.T."/>
            <person name="Vissers L.E."/>
            <person name="van de Vondervoort I.I."/>
            <person name="van Bon B.W."/>
            <person name="de Ligt J."/>
            <person name="Gilissen C."/>
            <person name="Hehir-Kwa J.Y."/>
            <person name="Neveling K."/>
            <person name="del Rosario M."/>
            <person name="Hira G."/>
            <person name="Reitano S."/>
            <person name="Vitello A."/>
            <person name="Failla P."/>
            <person name="Greco D."/>
            <person name="Fichera M."/>
            <person name="Galesi O."/>
            <person name="Kleefstra T."/>
            <person name="Greally M.T."/>
            <person name="Ockeloen C.W."/>
            <person name="Willemsen M.H."/>
            <person name="Bongers E.M."/>
            <person name="Janssen I.M."/>
            <person name="Pfundt R."/>
            <person name="Veltman J.A."/>
            <person name="Romano C."/>
            <person name="Willemsen M.A."/>
            <person name="van Bokhoven H."/>
            <person name="Brunner H.G."/>
            <person name="de Vries B.B."/>
            <person name="de Brouwer A.P."/>
        </authorList>
    </citation>
    <scope>VARIANT CCDS1 ASN-336 DEL</scope>
</reference>
<reference key="25">
    <citation type="journal article" date="2013" name="Mol. Genet. Metab.">
        <title>Biochemical, molecular, and clinical diagnoses of patients with cerebral creatine deficiency syndromes.</title>
        <authorList>
            <person name="Comeaux M.S."/>
            <person name="Wang J."/>
            <person name="Wang G."/>
            <person name="Kleppe S."/>
            <person name="Zhang V.W."/>
            <person name="Schmitt E.S."/>
            <person name="Craigen W.J."/>
            <person name="Renaud D."/>
            <person name="Sun Q."/>
            <person name="Wong L.J."/>
        </authorList>
    </citation>
    <scope>VARIANTS CCDS1 HIS-80; CYS-383; ASP-448 AND ILE-539</scope>
</reference>
<reference key="26">
    <citation type="journal article" date="2015" name="Gene">
        <title>Estimated carrier frequency of creatine transporter deficiency in females in the general population using functional characterization of novel missense variants in the SLC6A8 gene.</title>
        <authorList>
            <person name="DesRoches C.L."/>
            <person name="Patel J."/>
            <person name="Wang P."/>
            <person name="Minassian B."/>
            <person name="Salomons G.S."/>
            <person name="Marshall C.R."/>
            <person name="Mercimek-Mahmutoglu S."/>
        </authorList>
    </citation>
    <scope>VARIANTS CCDS1 MET-270; GLN-294; LEU-314; THR-318 AND LEU-552</scope>
    <scope>CHARACTERIZATION OF VARIANTS CCDS1 MET-270; GLN-294; LEU-; THR-318 AND LEU-552</scope>
    <scope>VARIANTS HIS-186; SER-550; LEU-564; THR-611 AND LYS-624</scope>
    <scope>CHARACTERIZATION OF VARIANTS HIS-186; LEU-564; THR-611 AND LYS-624</scope>
    <scope>FUNCTION</scope>
    <scope>TRANSPORTER ACTIVITY</scope>
</reference>
<keyword id="KW-0025">Alternative splicing</keyword>
<keyword id="KW-1003">Cell membrane</keyword>
<keyword id="KW-0225">Disease variant</keyword>
<keyword id="KW-0325">Glycoprotein</keyword>
<keyword id="KW-0991">Intellectual disability</keyword>
<keyword id="KW-0406">Ion transport</keyword>
<keyword id="KW-0472">Membrane</keyword>
<keyword id="KW-0597">Phosphoprotein</keyword>
<keyword id="KW-1267">Proteomics identification</keyword>
<keyword id="KW-1185">Reference proteome</keyword>
<keyword id="KW-0915">Sodium</keyword>
<keyword id="KW-0739">Sodium transport</keyword>
<keyword id="KW-0769">Symport</keyword>
<keyword id="KW-0812">Transmembrane</keyword>
<keyword id="KW-1133">Transmembrane helix</keyword>
<keyword id="KW-0813">Transport</keyword>
<dbReference type="EMBL" id="L31409">
    <property type="protein sequence ID" value="AAC41688.1"/>
    <property type="molecule type" value="mRNA"/>
</dbReference>
<dbReference type="EMBL" id="S74039">
    <property type="protein sequence ID" value="AAB32284.1"/>
    <property type="molecule type" value="mRNA"/>
</dbReference>
<dbReference type="EMBL" id="U17986">
    <property type="protein sequence ID" value="AAA86990.1"/>
    <property type="molecule type" value="mRNA"/>
</dbReference>
<dbReference type="EMBL" id="EU280316">
    <property type="protein sequence ID" value="ABZ82022.1"/>
    <property type="molecule type" value="mRNA"/>
</dbReference>
<dbReference type="EMBL" id="AK295495">
    <property type="protein sequence ID" value="BAG58415.1"/>
    <property type="molecule type" value="mRNA"/>
</dbReference>
<dbReference type="EMBL" id="U52111">
    <property type="status" value="NOT_ANNOTATED_CDS"/>
    <property type="molecule type" value="Genomic_DNA"/>
</dbReference>
<dbReference type="EMBL" id="Z66539">
    <property type="protein sequence ID" value="CAA91442.1"/>
    <property type="molecule type" value="Genomic_DNA"/>
</dbReference>
<dbReference type="EMBL" id="U36341">
    <property type="protein sequence ID" value="AAA79507.1"/>
    <property type="molecule type" value="Genomic_DNA"/>
</dbReference>
<dbReference type="EMBL" id="BC012355">
    <property type="protein sequence ID" value="AAH12355.1"/>
    <property type="molecule type" value="mRNA"/>
</dbReference>
<dbReference type="EMBL" id="BC081558">
    <property type="protein sequence ID" value="AAH81558.1"/>
    <property type="molecule type" value="mRNA"/>
</dbReference>
<dbReference type="CCDS" id="CCDS14726.1">
    <molecule id="P48029-1"/>
</dbReference>
<dbReference type="CCDS" id="CCDS48190.1">
    <molecule id="P48029-4"/>
</dbReference>
<dbReference type="PIR" id="G02095">
    <property type="entry name" value="G02095"/>
</dbReference>
<dbReference type="PIR" id="JC2386">
    <property type="entry name" value="JC2386"/>
</dbReference>
<dbReference type="RefSeq" id="NP_001136277.1">
    <property type="nucleotide sequence ID" value="NM_001142805.1"/>
</dbReference>
<dbReference type="RefSeq" id="NP_001136278.1">
    <molecule id="P48029-4"/>
    <property type="nucleotide sequence ID" value="NM_001142806.1"/>
</dbReference>
<dbReference type="RefSeq" id="NP_005620.1">
    <molecule id="P48029-1"/>
    <property type="nucleotide sequence ID" value="NM_005629.4"/>
</dbReference>
<dbReference type="SMR" id="P48029"/>
<dbReference type="BioGRID" id="112426">
    <property type="interactions" value="152"/>
</dbReference>
<dbReference type="FunCoup" id="P48029">
    <property type="interactions" value="321"/>
</dbReference>
<dbReference type="IntAct" id="P48029">
    <property type="interactions" value="40"/>
</dbReference>
<dbReference type="MINT" id="P48029"/>
<dbReference type="STRING" id="9606.ENSP00000253122"/>
<dbReference type="ChEMBL" id="CHEMBL5209634"/>
<dbReference type="DrugBank" id="DB00148">
    <property type="generic name" value="Creatine"/>
</dbReference>
<dbReference type="DrugBank" id="DB13191">
    <property type="generic name" value="Phosphocreatine"/>
</dbReference>
<dbReference type="TCDB" id="2.A.22.3.11">
    <property type="family name" value="the neurotransmitter:sodium symporter (nss) family"/>
</dbReference>
<dbReference type="GlyCosmos" id="P48029">
    <property type="glycosylation" value="4 sites, 1 glycan"/>
</dbReference>
<dbReference type="GlyGen" id="P48029">
    <property type="glycosylation" value="4 sites, 2 N-linked glycans (2 sites), 1 O-linked glycan (1 site)"/>
</dbReference>
<dbReference type="iPTMnet" id="P48029"/>
<dbReference type="PhosphoSitePlus" id="P48029"/>
<dbReference type="SwissPalm" id="P48029"/>
<dbReference type="BioMuta" id="SLC6A8"/>
<dbReference type="DMDM" id="1352529"/>
<dbReference type="jPOST" id="P48029"/>
<dbReference type="MassIVE" id="P48029"/>
<dbReference type="PaxDb" id="9606-ENSP00000253122"/>
<dbReference type="PeptideAtlas" id="P48029"/>
<dbReference type="ProteomicsDB" id="20071"/>
<dbReference type="ProteomicsDB" id="55833">
    <molecule id="P48029-1"/>
</dbReference>
<dbReference type="ProteomicsDB" id="55834">
    <molecule id="P48029-2"/>
</dbReference>
<dbReference type="ProteomicsDB" id="55835">
    <molecule id="P48029-3"/>
</dbReference>
<dbReference type="Pumba" id="P48029"/>
<dbReference type="Antibodypedia" id="1476">
    <property type="antibodies" value="207 antibodies from 31 providers"/>
</dbReference>
<dbReference type="DNASU" id="6535"/>
<dbReference type="Ensembl" id="ENST00000253122.10">
    <molecule id="P48029-1"/>
    <property type="protein sequence ID" value="ENSP00000253122.5"/>
    <property type="gene ID" value="ENSG00000130821.17"/>
</dbReference>
<dbReference type="Ensembl" id="ENST00000430077.6">
    <molecule id="P48029-4"/>
    <property type="protein sequence ID" value="ENSP00000403041.2"/>
    <property type="gene ID" value="ENSG00000130821.17"/>
</dbReference>
<dbReference type="GeneID" id="6535"/>
<dbReference type="KEGG" id="hsa:6535"/>
<dbReference type="MANE-Select" id="ENST00000253122.10">
    <property type="protein sequence ID" value="ENSP00000253122.5"/>
    <property type="RefSeq nucleotide sequence ID" value="NM_005629.4"/>
    <property type="RefSeq protein sequence ID" value="NP_005620.1"/>
</dbReference>
<dbReference type="UCSC" id="uc011myx.2">
    <molecule id="P48029-1"/>
    <property type="organism name" value="human"/>
</dbReference>
<dbReference type="AGR" id="HGNC:11055"/>
<dbReference type="CTD" id="6535"/>
<dbReference type="DisGeNET" id="6535"/>
<dbReference type="GeneCards" id="SLC6A8"/>
<dbReference type="GeneReviews" id="SLC6A8"/>
<dbReference type="HGNC" id="HGNC:11055">
    <property type="gene designation" value="SLC6A8"/>
</dbReference>
<dbReference type="HPA" id="ENSG00000130821">
    <property type="expression patterns" value="Low tissue specificity"/>
</dbReference>
<dbReference type="MalaCards" id="SLC6A8"/>
<dbReference type="MIM" id="300036">
    <property type="type" value="gene"/>
</dbReference>
<dbReference type="MIM" id="300352">
    <property type="type" value="phenotype"/>
</dbReference>
<dbReference type="neXtProt" id="NX_P48029"/>
<dbReference type="OpenTargets" id="ENSG00000130821"/>
<dbReference type="Orphanet" id="52503">
    <property type="disease" value="X-linked creatine transporter deficiency"/>
</dbReference>
<dbReference type="PharmGKB" id="PA35915"/>
<dbReference type="VEuPathDB" id="HostDB:ENSG00000130821"/>
<dbReference type="eggNOG" id="KOG3660">
    <property type="taxonomic scope" value="Eukaryota"/>
</dbReference>
<dbReference type="GeneTree" id="ENSGT00940000155869"/>
<dbReference type="HOGENOM" id="CLU_006855_9_5_1"/>
<dbReference type="InParanoid" id="P48029"/>
<dbReference type="OMA" id="CVEIFRQ"/>
<dbReference type="OrthoDB" id="6581954at2759"/>
<dbReference type="PAN-GO" id="P48029">
    <property type="GO annotations" value="2 GO annotations based on evolutionary models"/>
</dbReference>
<dbReference type="PhylomeDB" id="P48029"/>
<dbReference type="TreeFam" id="TF343812"/>
<dbReference type="PathwayCommons" id="P48029"/>
<dbReference type="Reactome" id="R-HSA-71288">
    <property type="pathway name" value="Creatine metabolism"/>
</dbReference>
<dbReference type="SABIO-RK" id="P48029"/>
<dbReference type="SignaLink" id="P48029"/>
<dbReference type="SIGNOR" id="P48029"/>
<dbReference type="BioGRID-ORCS" id="6535">
    <property type="hits" value="38 hits in 786 CRISPR screens"/>
</dbReference>
<dbReference type="ChiTaRS" id="SLC6A8">
    <property type="organism name" value="human"/>
</dbReference>
<dbReference type="GeneWiki" id="SLC6A8"/>
<dbReference type="GenomeRNAi" id="6535"/>
<dbReference type="Pharos" id="P48029">
    <property type="development level" value="Tbio"/>
</dbReference>
<dbReference type="PRO" id="PR:P48029"/>
<dbReference type="Proteomes" id="UP000005640">
    <property type="component" value="Chromosome X"/>
</dbReference>
<dbReference type="RNAct" id="P48029">
    <property type="molecule type" value="protein"/>
</dbReference>
<dbReference type="Bgee" id="ENSG00000130821">
    <property type="expression patterns" value="Expressed in inferior olivary complex and 200 other cell types or tissues"/>
</dbReference>
<dbReference type="ExpressionAtlas" id="P48029">
    <property type="expression patterns" value="baseline and differential"/>
</dbReference>
<dbReference type="GO" id="GO:0016324">
    <property type="term" value="C:apical plasma membrane"/>
    <property type="evidence" value="ECO:0000314"/>
    <property type="project" value="UniProtKB"/>
</dbReference>
<dbReference type="GO" id="GO:0016020">
    <property type="term" value="C:membrane"/>
    <property type="evidence" value="ECO:0000304"/>
    <property type="project" value="ProtInc"/>
</dbReference>
<dbReference type="GO" id="GO:0005886">
    <property type="term" value="C:plasma membrane"/>
    <property type="evidence" value="ECO:0000315"/>
    <property type="project" value="UniProtKB"/>
</dbReference>
<dbReference type="GO" id="GO:0005308">
    <property type="term" value="F:creatine transmembrane transporter activity"/>
    <property type="evidence" value="ECO:0000303"/>
    <property type="project" value="UniProtKB"/>
</dbReference>
<dbReference type="GO" id="GO:0005309">
    <property type="term" value="F:creatine:sodium symporter activity"/>
    <property type="evidence" value="ECO:0000314"/>
    <property type="project" value="UniProtKB"/>
</dbReference>
<dbReference type="GO" id="GO:0005332">
    <property type="term" value="F:gamma-aminobutyric acid:sodium:chloride symporter activity"/>
    <property type="evidence" value="ECO:0000318"/>
    <property type="project" value="GO_Central"/>
</dbReference>
<dbReference type="GO" id="GO:0006865">
    <property type="term" value="P:amino acid transport"/>
    <property type="evidence" value="ECO:0000318"/>
    <property type="project" value="GO_Central"/>
</dbReference>
<dbReference type="GO" id="GO:0006600">
    <property type="term" value="P:creatine metabolic process"/>
    <property type="evidence" value="ECO:0000304"/>
    <property type="project" value="Reactome"/>
</dbReference>
<dbReference type="GO" id="GO:0015881">
    <property type="term" value="P:creatine transmembrane transport"/>
    <property type="evidence" value="ECO:0000315"/>
    <property type="project" value="UniProtKB"/>
</dbReference>
<dbReference type="GO" id="GO:0006936">
    <property type="term" value="P:muscle contraction"/>
    <property type="evidence" value="ECO:0000304"/>
    <property type="project" value="ProtInc"/>
</dbReference>
<dbReference type="GO" id="GO:0006836">
    <property type="term" value="P:neurotransmitter transport"/>
    <property type="evidence" value="ECO:0007669"/>
    <property type="project" value="InterPro"/>
</dbReference>
<dbReference type="GO" id="GO:0071705">
    <property type="term" value="P:nitrogen compound transport"/>
    <property type="evidence" value="ECO:0000314"/>
    <property type="project" value="ARUK-UCL"/>
</dbReference>
<dbReference type="GO" id="GO:0035725">
    <property type="term" value="P:sodium ion transmembrane transport"/>
    <property type="evidence" value="ECO:0000318"/>
    <property type="project" value="GO_Central"/>
</dbReference>
<dbReference type="CDD" id="cd11509">
    <property type="entry name" value="SLC6sbd_CT1"/>
    <property type="match status" value="1"/>
</dbReference>
<dbReference type="InterPro" id="IPR000175">
    <property type="entry name" value="Na/ntran_symport"/>
</dbReference>
<dbReference type="InterPro" id="IPR002984">
    <property type="entry name" value="Na/ntran_symport_creatine"/>
</dbReference>
<dbReference type="InterPro" id="IPR037272">
    <property type="entry name" value="SNS_sf"/>
</dbReference>
<dbReference type="PANTHER" id="PTHR11616:SF96">
    <property type="entry name" value="SODIUM- AND CHLORIDE-DEPENDENT CREATINE TRANSPORTER 1"/>
    <property type="match status" value="1"/>
</dbReference>
<dbReference type="PANTHER" id="PTHR11616">
    <property type="entry name" value="SODIUM/CHLORIDE DEPENDENT TRANSPORTER"/>
    <property type="match status" value="1"/>
</dbReference>
<dbReference type="Pfam" id="PF00209">
    <property type="entry name" value="SNF"/>
    <property type="match status" value="1"/>
</dbReference>
<dbReference type="PRINTS" id="PR01199">
    <property type="entry name" value="CRTTRANSPORT"/>
</dbReference>
<dbReference type="PRINTS" id="PR00176">
    <property type="entry name" value="NANEUSMPORT"/>
</dbReference>
<dbReference type="SUPFAM" id="SSF161070">
    <property type="entry name" value="SNF-like"/>
    <property type="match status" value="1"/>
</dbReference>
<dbReference type="PROSITE" id="PS00610">
    <property type="entry name" value="NA_NEUROTRAN_SYMP_1"/>
    <property type="match status" value="1"/>
</dbReference>
<dbReference type="PROSITE" id="PS00754">
    <property type="entry name" value="NA_NEUROTRAN_SYMP_2"/>
    <property type="match status" value="1"/>
</dbReference>
<dbReference type="PROSITE" id="PS50267">
    <property type="entry name" value="NA_NEUROTRAN_SYMP_3"/>
    <property type="match status" value="1"/>
</dbReference>
<protein>
    <recommendedName>
        <fullName>Sodium- and chloride-dependent creatine transporter 1</fullName>
        <shortName>CT1</shortName>
        <shortName>Creatine transporter 1</shortName>
    </recommendedName>
    <alternativeName>
        <fullName>Solute carrier family 6 member 8</fullName>
    </alternativeName>
</protein>
<sequence>MAKKSAENGIYSVSGDEKKGPLIAPGPDGAPAKGDGPVGLGTPGGRLAVPPRETWTRQMDFIMSCVGFAVGLGNVWRFPYLCYKNGGGVFLIPYVLIALVGGIPIFFLEISLGQFMKAGSINVWNICPLFKGLGYASMVIVFYCNTYYIMVLAWGFYYLVKSFTTTLPWATCGHTWNTPDCVEIFRHEDCANASLANLTCDQLADRRSPVIEFWENKVLRLSGGLEVPGALNWEVTLCLLACWVLVYFCVWKGVKSTGKIVYFTATFPYVVLVVLLVRGVLLPGALDGIIYYLKPDWSKLGSPQVWIDAGTQIFFSYAIGLGALTALGSYNRFNNNCYKDAIILALINSGTSFFAGFVVFSILGFMAAEQGVHISKVAESGPGLAFIAYPRAVTLMPVAPLWAALFFFMLLLLGLDSQFVGVEGFITGLLDLLPASYYFRFQREISVALCCALCFVIDLSMVTDGGMYVFQLFDYYSASGTTLLWQAFWECVVVAWVYGADRFMDDIACMIGYRPCPWMKWCWSFFTPLVCMGIFIFNVVYYEPLVYNNTYVYPWWGEAMGWAFALSSMLCVPLHLLGCLLRAKGTMAERWQHLTQPIWGLHHLEYRAQDADVRGLTTLTPVSESSKVVVVESVM</sequence>